<feature type="chain" id="PRO_1000018980" description="Bifunctional purine biosynthesis protein PurH">
    <location>
        <begin position="1"/>
        <end position="529"/>
    </location>
</feature>
<feature type="domain" description="MGS-like" evidence="2">
    <location>
        <begin position="1"/>
        <end position="146"/>
    </location>
</feature>
<dbReference type="EC" id="2.1.2.3" evidence="1"/>
<dbReference type="EC" id="3.5.4.10" evidence="1"/>
<dbReference type="EMBL" id="CP000435">
    <property type="protein sequence ID" value="ABI46591.1"/>
    <property type="molecule type" value="Genomic_DNA"/>
</dbReference>
<dbReference type="RefSeq" id="WP_011618269.1">
    <property type="nucleotide sequence ID" value="NC_008319.1"/>
</dbReference>
<dbReference type="SMR" id="Q0IDE8"/>
<dbReference type="STRING" id="64471.sync_0289"/>
<dbReference type="KEGG" id="syg:sync_0289"/>
<dbReference type="eggNOG" id="COG0138">
    <property type="taxonomic scope" value="Bacteria"/>
</dbReference>
<dbReference type="HOGENOM" id="CLU_016316_5_2_3"/>
<dbReference type="OrthoDB" id="9802065at2"/>
<dbReference type="UniPathway" id="UPA00074">
    <property type="reaction ID" value="UER00133"/>
</dbReference>
<dbReference type="UniPathway" id="UPA00074">
    <property type="reaction ID" value="UER00135"/>
</dbReference>
<dbReference type="Proteomes" id="UP000001961">
    <property type="component" value="Chromosome"/>
</dbReference>
<dbReference type="GO" id="GO:0005829">
    <property type="term" value="C:cytosol"/>
    <property type="evidence" value="ECO:0007669"/>
    <property type="project" value="TreeGrafter"/>
</dbReference>
<dbReference type="GO" id="GO:0003937">
    <property type="term" value="F:IMP cyclohydrolase activity"/>
    <property type="evidence" value="ECO:0007669"/>
    <property type="project" value="UniProtKB-UniRule"/>
</dbReference>
<dbReference type="GO" id="GO:0004643">
    <property type="term" value="F:phosphoribosylaminoimidazolecarboxamide formyltransferase activity"/>
    <property type="evidence" value="ECO:0007669"/>
    <property type="project" value="UniProtKB-UniRule"/>
</dbReference>
<dbReference type="GO" id="GO:0006189">
    <property type="term" value="P:'de novo' IMP biosynthetic process"/>
    <property type="evidence" value="ECO:0007669"/>
    <property type="project" value="UniProtKB-UniRule"/>
</dbReference>
<dbReference type="CDD" id="cd01421">
    <property type="entry name" value="IMPCH"/>
    <property type="match status" value="1"/>
</dbReference>
<dbReference type="FunFam" id="3.40.140.20:FF:000001">
    <property type="entry name" value="Bifunctional purine biosynthesis protein PurH"/>
    <property type="match status" value="1"/>
</dbReference>
<dbReference type="FunFam" id="3.40.50.1380:FF:000001">
    <property type="entry name" value="Bifunctional purine biosynthesis protein PurH"/>
    <property type="match status" value="1"/>
</dbReference>
<dbReference type="Gene3D" id="3.40.140.20">
    <property type="match status" value="2"/>
</dbReference>
<dbReference type="Gene3D" id="3.40.50.1380">
    <property type="entry name" value="Methylglyoxal synthase-like domain"/>
    <property type="match status" value="1"/>
</dbReference>
<dbReference type="HAMAP" id="MF_00139">
    <property type="entry name" value="PurH"/>
    <property type="match status" value="1"/>
</dbReference>
<dbReference type="InterPro" id="IPR024051">
    <property type="entry name" value="AICAR_Tfase_dup_dom_sf"/>
</dbReference>
<dbReference type="InterPro" id="IPR016193">
    <property type="entry name" value="Cytidine_deaminase-like"/>
</dbReference>
<dbReference type="InterPro" id="IPR011607">
    <property type="entry name" value="MGS-like_dom"/>
</dbReference>
<dbReference type="InterPro" id="IPR036914">
    <property type="entry name" value="MGS-like_dom_sf"/>
</dbReference>
<dbReference type="InterPro" id="IPR002695">
    <property type="entry name" value="PurH-like"/>
</dbReference>
<dbReference type="NCBIfam" id="NF002049">
    <property type="entry name" value="PRK00881.1"/>
    <property type="match status" value="1"/>
</dbReference>
<dbReference type="NCBIfam" id="TIGR00355">
    <property type="entry name" value="purH"/>
    <property type="match status" value="1"/>
</dbReference>
<dbReference type="PANTHER" id="PTHR11692:SF0">
    <property type="entry name" value="BIFUNCTIONAL PURINE BIOSYNTHESIS PROTEIN ATIC"/>
    <property type="match status" value="1"/>
</dbReference>
<dbReference type="PANTHER" id="PTHR11692">
    <property type="entry name" value="BIFUNCTIONAL PURINE BIOSYNTHESIS PROTEIN PURH"/>
    <property type="match status" value="1"/>
</dbReference>
<dbReference type="Pfam" id="PF01808">
    <property type="entry name" value="AICARFT_IMPCHas"/>
    <property type="match status" value="1"/>
</dbReference>
<dbReference type="Pfam" id="PF02142">
    <property type="entry name" value="MGS"/>
    <property type="match status" value="1"/>
</dbReference>
<dbReference type="PIRSF" id="PIRSF000414">
    <property type="entry name" value="AICARFT_IMPCHas"/>
    <property type="match status" value="1"/>
</dbReference>
<dbReference type="SMART" id="SM00798">
    <property type="entry name" value="AICARFT_IMPCHas"/>
    <property type="match status" value="1"/>
</dbReference>
<dbReference type="SMART" id="SM00851">
    <property type="entry name" value="MGS"/>
    <property type="match status" value="1"/>
</dbReference>
<dbReference type="SUPFAM" id="SSF53927">
    <property type="entry name" value="Cytidine deaminase-like"/>
    <property type="match status" value="1"/>
</dbReference>
<dbReference type="SUPFAM" id="SSF52335">
    <property type="entry name" value="Methylglyoxal synthase-like"/>
    <property type="match status" value="1"/>
</dbReference>
<dbReference type="PROSITE" id="PS51855">
    <property type="entry name" value="MGS"/>
    <property type="match status" value="1"/>
</dbReference>
<accession>Q0IDE8</accession>
<proteinExistence type="inferred from homology"/>
<evidence type="ECO:0000255" key="1">
    <source>
        <dbReference type="HAMAP-Rule" id="MF_00139"/>
    </source>
</evidence>
<evidence type="ECO:0000255" key="2">
    <source>
        <dbReference type="PROSITE-ProRule" id="PRU01202"/>
    </source>
</evidence>
<organism>
    <name type="scientific">Synechococcus sp. (strain CC9311)</name>
    <dbReference type="NCBI Taxonomy" id="64471"/>
    <lineage>
        <taxon>Bacteria</taxon>
        <taxon>Bacillati</taxon>
        <taxon>Cyanobacteriota</taxon>
        <taxon>Cyanophyceae</taxon>
        <taxon>Synechococcales</taxon>
        <taxon>Synechococcaceae</taxon>
        <taxon>Synechococcus</taxon>
    </lineage>
</organism>
<sequence length="529" mass="55772">MAPTALLSVSDKRGVVPLAEALHRLHGYQLLSSGGTAKVLQEAGLPVTRVADHTGAPEILGGRVKTLHPRIHGGILARRGDPAHEADLLEQQIDPIDVVVVNLYPFRETVATPDVSWDAAIENIDIGGPTMVRSAAKNHAHVAVLTSPEQYDRFLKALSGSAGGVNANVRRQLALEAFAHTAAYDVAISRWMQSRPELQPDVEAAAPAEALPWLEALPLRQTLRYGENPHQKAAWFSSPMGWGGAKQLQGKALSTNNLLDLEAALATVREFGYGSSGLHPAQQAAAVVVKHTNPCGVAVGDGVGIALTRALDGDRISAFGGIVALNAVVDGPAAKELTSLFLECVVAPGYSSEALEILAAKGNLRLLELPPEAIDAAPKDHVRSILGGVLVQDLDDQPIDPSAWTVASQRQPTTAETADLRFAWQLVRHVRSNAILVARDGQSLGVGAGQMNRVGSARIALEAAGEQAVGAVLASDGFFPFDDTVRLAASHGIKAVIHPGGSLRDADSIKACDELGLAMVLTGRRHFLH</sequence>
<name>PUR9_SYNS3</name>
<gene>
    <name evidence="1" type="primary">purH</name>
    <name type="ordered locus">sync_0289</name>
</gene>
<protein>
    <recommendedName>
        <fullName evidence="1">Bifunctional purine biosynthesis protein PurH</fullName>
    </recommendedName>
    <domain>
        <recommendedName>
            <fullName evidence="1">Phosphoribosylaminoimidazolecarboxamide formyltransferase</fullName>
            <ecNumber evidence="1">2.1.2.3</ecNumber>
        </recommendedName>
        <alternativeName>
            <fullName evidence="1">AICAR transformylase</fullName>
        </alternativeName>
    </domain>
    <domain>
        <recommendedName>
            <fullName evidence="1">IMP cyclohydrolase</fullName>
            <ecNumber evidence="1">3.5.4.10</ecNumber>
        </recommendedName>
        <alternativeName>
            <fullName evidence="1">ATIC</fullName>
        </alternativeName>
        <alternativeName>
            <fullName evidence="1">IMP synthase</fullName>
        </alternativeName>
        <alternativeName>
            <fullName evidence="1">Inosinicase</fullName>
        </alternativeName>
    </domain>
</protein>
<comment type="catalytic activity">
    <reaction evidence="1">
        <text>(6R)-10-formyltetrahydrofolate + 5-amino-1-(5-phospho-beta-D-ribosyl)imidazole-4-carboxamide = 5-formamido-1-(5-phospho-D-ribosyl)imidazole-4-carboxamide + (6S)-5,6,7,8-tetrahydrofolate</text>
        <dbReference type="Rhea" id="RHEA:22192"/>
        <dbReference type="ChEBI" id="CHEBI:57453"/>
        <dbReference type="ChEBI" id="CHEBI:58467"/>
        <dbReference type="ChEBI" id="CHEBI:58475"/>
        <dbReference type="ChEBI" id="CHEBI:195366"/>
        <dbReference type="EC" id="2.1.2.3"/>
    </reaction>
</comment>
<comment type="catalytic activity">
    <reaction evidence="1">
        <text>IMP + H2O = 5-formamido-1-(5-phospho-D-ribosyl)imidazole-4-carboxamide</text>
        <dbReference type="Rhea" id="RHEA:18445"/>
        <dbReference type="ChEBI" id="CHEBI:15377"/>
        <dbReference type="ChEBI" id="CHEBI:58053"/>
        <dbReference type="ChEBI" id="CHEBI:58467"/>
        <dbReference type="EC" id="3.5.4.10"/>
    </reaction>
</comment>
<comment type="pathway">
    <text evidence="1">Purine metabolism; IMP biosynthesis via de novo pathway; 5-formamido-1-(5-phospho-D-ribosyl)imidazole-4-carboxamide from 5-amino-1-(5-phospho-D-ribosyl)imidazole-4-carboxamide (10-formyl THF route): step 1/1.</text>
</comment>
<comment type="pathway">
    <text evidence="1">Purine metabolism; IMP biosynthesis via de novo pathway; IMP from 5-formamido-1-(5-phospho-D-ribosyl)imidazole-4-carboxamide: step 1/1.</text>
</comment>
<comment type="domain">
    <text evidence="1">The IMP cyclohydrolase activity resides in the N-terminal region.</text>
</comment>
<comment type="similarity">
    <text evidence="1">Belongs to the PurH family.</text>
</comment>
<keyword id="KW-0378">Hydrolase</keyword>
<keyword id="KW-0511">Multifunctional enzyme</keyword>
<keyword id="KW-0658">Purine biosynthesis</keyword>
<keyword id="KW-1185">Reference proteome</keyword>
<keyword id="KW-0808">Transferase</keyword>
<reference key="1">
    <citation type="journal article" date="2006" name="Proc. Natl. Acad. Sci. U.S.A.">
        <title>Genome sequence of Synechococcus CC9311: insights into adaptation to a coastal environment.</title>
        <authorList>
            <person name="Palenik B."/>
            <person name="Ren Q."/>
            <person name="Dupont C.L."/>
            <person name="Myers G.S."/>
            <person name="Heidelberg J.F."/>
            <person name="Badger J.H."/>
            <person name="Madupu R."/>
            <person name="Nelson W.C."/>
            <person name="Brinkac L.M."/>
            <person name="Dodson R.J."/>
            <person name="Durkin A.S."/>
            <person name="Daugherty S.C."/>
            <person name="Sullivan S.A."/>
            <person name="Khouri H."/>
            <person name="Mohamoud Y."/>
            <person name="Halpin R."/>
            <person name="Paulsen I.T."/>
        </authorList>
    </citation>
    <scope>NUCLEOTIDE SEQUENCE [LARGE SCALE GENOMIC DNA]</scope>
    <source>
        <strain>CC9311</strain>
    </source>
</reference>